<sequence length="111" mass="12051">ASFBZAPPGBVKSGEKIFKTKCAQCHTVDKGAGHKQGPNLNGLFGRQSGTTPGYSYSAANKNMAVIWGENTLYDYLLNPKKYIPGTKMVFPGLKKPQERADLIAYLKEATA</sequence>
<reference key="1">
    <citation type="journal article" date="1971" name="Biochem. J.">
        <title>The amino acid sequence of sesame (Sesamum indicum L.) and castor (Ricinus communis L.) cytochrome c.</title>
        <authorList>
            <person name="Thompson E.W."/>
            <person name="Richardson M."/>
            <person name="Boulter D."/>
        </authorList>
    </citation>
    <scope>PROTEIN SEQUENCE</scope>
    <scope>ACETYLATION AT ALA-1</scope>
    <scope>METHYLATION AT LYS-80 AND LYS-94</scope>
</reference>
<keyword id="KW-0007">Acetylation</keyword>
<keyword id="KW-0903">Direct protein sequencing</keyword>
<keyword id="KW-0249">Electron transport</keyword>
<keyword id="KW-0349">Heme</keyword>
<keyword id="KW-0408">Iron</keyword>
<keyword id="KW-0479">Metal-binding</keyword>
<keyword id="KW-0488">Methylation</keyword>
<keyword id="KW-0496">Mitochondrion</keyword>
<keyword id="KW-1185">Reference proteome</keyword>
<keyword id="KW-0679">Respiratory chain</keyword>
<keyword id="KW-0813">Transport</keyword>
<organism>
    <name type="scientific">Sesamum indicum</name>
    <name type="common">Oriental sesame</name>
    <name type="synonym">Sesamum orientale</name>
    <dbReference type="NCBI Taxonomy" id="4182"/>
    <lineage>
        <taxon>Eukaryota</taxon>
        <taxon>Viridiplantae</taxon>
        <taxon>Streptophyta</taxon>
        <taxon>Embryophyta</taxon>
        <taxon>Tracheophyta</taxon>
        <taxon>Spermatophyta</taxon>
        <taxon>Magnoliopsida</taxon>
        <taxon>eudicotyledons</taxon>
        <taxon>Gunneridae</taxon>
        <taxon>Pentapetalae</taxon>
        <taxon>asterids</taxon>
        <taxon>lamiids</taxon>
        <taxon>Lamiales</taxon>
        <taxon>Pedaliaceae</taxon>
        <taxon>Sesamum</taxon>
    </lineage>
</organism>
<proteinExistence type="evidence at protein level"/>
<accession>P00054</accession>
<protein>
    <recommendedName>
        <fullName>Cytochrome c</fullName>
    </recommendedName>
</protein>
<comment type="function">
    <text>Electron carrier protein. The oxidized form of the cytochrome c heme group can accept an electron from the heme group of the cytochrome c1 subunit of cytochrome reductase. Cytochrome c then transfers this electron to the cytochrome oxidase complex, the final protein carrier in the mitochondrial electron-transport chain.</text>
</comment>
<comment type="subcellular location">
    <subcellularLocation>
        <location>Mitochondrion intermembrane space</location>
    </subcellularLocation>
    <text>Loosely associated with the inner membrane.</text>
</comment>
<comment type="PTM">
    <text>Binds 1 heme c group covalently per subunit.</text>
</comment>
<comment type="miscellaneous">
    <text>The authors placed the amides at positions 24, 70, and 97 by homology with other cytochromes c.</text>
</comment>
<comment type="similarity">
    <text evidence="3">Belongs to the cytochrome c family.</text>
</comment>
<comment type="online information" name="Protein Spotlight">
    <link uri="https://www.proteinspotlight.org/back_issues/076"/>
    <text>Life shuttle - Issue 76 of November 2006</text>
</comment>
<name>CYC_SESIN</name>
<dbReference type="PIR" id="A00047">
    <property type="entry name" value="CCES"/>
</dbReference>
<dbReference type="iPTMnet" id="P00054"/>
<dbReference type="InParanoid" id="P00054"/>
<dbReference type="Proteomes" id="UP000504604">
    <property type="component" value="Unplaced"/>
</dbReference>
<dbReference type="GO" id="GO:0005758">
    <property type="term" value="C:mitochondrial intermembrane space"/>
    <property type="evidence" value="ECO:0007669"/>
    <property type="project" value="UniProtKB-SubCell"/>
</dbReference>
<dbReference type="GO" id="GO:0009055">
    <property type="term" value="F:electron transfer activity"/>
    <property type="evidence" value="ECO:0007669"/>
    <property type="project" value="InterPro"/>
</dbReference>
<dbReference type="GO" id="GO:0020037">
    <property type="term" value="F:heme binding"/>
    <property type="evidence" value="ECO:0007669"/>
    <property type="project" value="InterPro"/>
</dbReference>
<dbReference type="GO" id="GO:0046872">
    <property type="term" value="F:metal ion binding"/>
    <property type="evidence" value="ECO:0007669"/>
    <property type="project" value="UniProtKB-KW"/>
</dbReference>
<dbReference type="FunFam" id="1.10.760.10:FF:000001">
    <property type="entry name" value="Cytochrome c iso-1"/>
    <property type="match status" value="1"/>
</dbReference>
<dbReference type="Gene3D" id="1.10.760.10">
    <property type="entry name" value="Cytochrome c-like domain"/>
    <property type="match status" value="1"/>
</dbReference>
<dbReference type="InterPro" id="IPR009056">
    <property type="entry name" value="Cyt_c-like_dom"/>
</dbReference>
<dbReference type="InterPro" id="IPR036909">
    <property type="entry name" value="Cyt_c-like_dom_sf"/>
</dbReference>
<dbReference type="InterPro" id="IPR002327">
    <property type="entry name" value="Cyt_c_1A/1B"/>
</dbReference>
<dbReference type="PANTHER" id="PTHR11961">
    <property type="entry name" value="CYTOCHROME C"/>
    <property type="match status" value="1"/>
</dbReference>
<dbReference type="Pfam" id="PF00034">
    <property type="entry name" value="Cytochrom_C"/>
    <property type="match status" value="1"/>
</dbReference>
<dbReference type="PRINTS" id="PR00604">
    <property type="entry name" value="CYTCHRMECIAB"/>
</dbReference>
<dbReference type="SUPFAM" id="SSF46626">
    <property type="entry name" value="Cytochrome c"/>
    <property type="match status" value="1"/>
</dbReference>
<dbReference type="PROSITE" id="PS51007">
    <property type="entry name" value="CYTC"/>
    <property type="match status" value="1"/>
</dbReference>
<evidence type="ECO:0000255" key="1">
    <source>
        <dbReference type="PROSITE-ProRule" id="PRU00433"/>
    </source>
</evidence>
<evidence type="ECO:0000269" key="2">
    <source>
    </source>
</evidence>
<evidence type="ECO:0000305" key="3"/>
<feature type="chain" id="PRO_0000108308" description="Cytochrome c">
    <location>
        <begin position="1"/>
        <end position="111"/>
    </location>
</feature>
<feature type="binding site" description="covalent" evidence="1 2">
    <location>
        <position position="22"/>
    </location>
    <ligand>
        <name>heme c</name>
        <dbReference type="ChEBI" id="CHEBI:61717"/>
    </ligand>
</feature>
<feature type="binding site" description="covalent" evidence="1 2">
    <location>
        <position position="25"/>
    </location>
    <ligand>
        <name>heme c</name>
        <dbReference type="ChEBI" id="CHEBI:61717"/>
    </ligand>
</feature>
<feature type="binding site" description="axial binding residue">
    <location>
        <position position="26"/>
    </location>
    <ligand>
        <name>heme c</name>
        <dbReference type="ChEBI" id="CHEBI:61717"/>
    </ligand>
    <ligandPart>
        <name>Fe</name>
        <dbReference type="ChEBI" id="CHEBI:18248"/>
    </ligandPart>
</feature>
<feature type="binding site" description="axial binding residue">
    <location>
        <position position="88"/>
    </location>
    <ligand>
        <name>heme c</name>
        <dbReference type="ChEBI" id="CHEBI:61717"/>
    </ligand>
    <ligandPart>
        <name>Fe</name>
        <dbReference type="ChEBI" id="CHEBI:18248"/>
    </ligandPart>
</feature>
<feature type="modified residue" description="N-acetylalanine" evidence="2">
    <location>
        <position position="1"/>
    </location>
</feature>
<feature type="modified residue" description="N6,N6,N6-trimethyllysine" evidence="2">
    <location>
        <position position="80"/>
    </location>
</feature>
<feature type="modified residue" description="N6,N6,N6-trimethyllysine" evidence="2">
    <location>
        <position position="94"/>
    </location>
</feature>
<feature type="sequence variant" description="In 30% of the molecules.">
    <original>B</original>
    <variation>S</variation>
    <location>
        <position position="4"/>
    </location>
</feature>